<keyword id="KW-0249">Electron transport</keyword>
<keyword id="KW-0349">Heme</keyword>
<keyword id="KW-0408">Iron</keyword>
<keyword id="KW-0472">Membrane</keyword>
<keyword id="KW-0479">Metal-binding</keyword>
<keyword id="KW-0496">Mitochondrion</keyword>
<keyword id="KW-0999">Mitochondrion inner membrane</keyword>
<keyword id="KW-0679">Respiratory chain</keyword>
<keyword id="KW-0812">Transmembrane</keyword>
<keyword id="KW-1133">Transmembrane helix</keyword>
<keyword id="KW-0813">Transport</keyword>
<keyword id="KW-0830">Ubiquinone</keyword>
<dbReference type="EMBL" id="AY621019">
    <property type="protein sequence ID" value="AAU04742.1"/>
    <property type="molecule type" value="Genomic_DNA"/>
</dbReference>
<dbReference type="EMBL" id="AY621015">
    <property type="protein sequence ID" value="AAU04738.1"/>
    <property type="molecule type" value="Genomic_DNA"/>
</dbReference>
<dbReference type="SMR" id="Q4VUU4"/>
<dbReference type="GO" id="GO:0005743">
    <property type="term" value="C:mitochondrial inner membrane"/>
    <property type="evidence" value="ECO:0007669"/>
    <property type="project" value="UniProtKB-SubCell"/>
</dbReference>
<dbReference type="GO" id="GO:0045275">
    <property type="term" value="C:respiratory chain complex III"/>
    <property type="evidence" value="ECO:0007669"/>
    <property type="project" value="InterPro"/>
</dbReference>
<dbReference type="GO" id="GO:0046872">
    <property type="term" value="F:metal ion binding"/>
    <property type="evidence" value="ECO:0007669"/>
    <property type="project" value="UniProtKB-KW"/>
</dbReference>
<dbReference type="GO" id="GO:0008121">
    <property type="term" value="F:ubiquinol-cytochrome-c reductase activity"/>
    <property type="evidence" value="ECO:0007669"/>
    <property type="project" value="InterPro"/>
</dbReference>
<dbReference type="GO" id="GO:0006122">
    <property type="term" value="P:mitochondrial electron transport, ubiquinol to cytochrome c"/>
    <property type="evidence" value="ECO:0007669"/>
    <property type="project" value="TreeGrafter"/>
</dbReference>
<dbReference type="CDD" id="cd00290">
    <property type="entry name" value="cytochrome_b_C"/>
    <property type="match status" value="1"/>
</dbReference>
<dbReference type="CDD" id="cd00284">
    <property type="entry name" value="Cytochrome_b_N"/>
    <property type="match status" value="1"/>
</dbReference>
<dbReference type="FunFam" id="1.20.810.10:FF:000002">
    <property type="entry name" value="Cytochrome b"/>
    <property type="match status" value="1"/>
</dbReference>
<dbReference type="Gene3D" id="1.20.810.10">
    <property type="entry name" value="Cytochrome Bc1 Complex, Chain C"/>
    <property type="match status" value="1"/>
</dbReference>
<dbReference type="InterPro" id="IPR005798">
    <property type="entry name" value="Cyt_b/b6_C"/>
</dbReference>
<dbReference type="InterPro" id="IPR036150">
    <property type="entry name" value="Cyt_b/b6_C_sf"/>
</dbReference>
<dbReference type="InterPro" id="IPR005797">
    <property type="entry name" value="Cyt_b/b6_N"/>
</dbReference>
<dbReference type="InterPro" id="IPR027387">
    <property type="entry name" value="Cytb/b6-like_sf"/>
</dbReference>
<dbReference type="InterPro" id="IPR030689">
    <property type="entry name" value="Cytochrome_b"/>
</dbReference>
<dbReference type="InterPro" id="IPR048260">
    <property type="entry name" value="Cytochrome_b_C_euk/bac"/>
</dbReference>
<dbReference type="InterPro" id="IPR048259">
    <property type="entry name" value="Cytochrome_b_N_euk/bac"/>
</dbReference>
<dbReference type="InterPro" id="IPR016174">
    <property type="entry name" value="Di-haem_cyt_TM"/>
</dbReference>
<dbReference type="PANTHER" id="PTHR19271">
    <property type="entry name" value="CYTOCHROME B"/>
    <property type="match status" value="1"/>
</dbReference>
<dbReference type="PANTHER" id="PTHR19271:SF16">
    <property type="entry name" value="CYTOCHROME B"/>
    <property type="match status" value="1"/>
</dbReference>
<dbReference type="Pfam" id="PF00032">
    <property type="entry name" value="Cytochrom_B_C"/>
    <property type="match status" value="1"/>
</dbReference>
<dbReference type="Pfam" id="PF00033">
    <property type="entry name" value="Cytochrome_B"/>
    <property type="match status" value="1"/>
</dbReference>
<dbReference type="PIRSF" id="PIRSF038885">
    <property type="entry name" value="COB"/>
    <property type="match status" value="1"/>
</dbReference>
<dbReference type="SUPFAM" id="SSF81648">
    <property type="entry name" value="a domain/subunit of cytochrome bc1 complex (Ubiquinol-cytochrome c reductase)"/>
    <property type="match status" value="1"/>
</dbReference>
<dbReference type="SUPFAM" id="SSF81342">
    <property type="entry name" value="Transmembrane di-heme cytochromes"/>
    <property type="match status" value="1"/>
</dbReference>
<dbReference type="PROSITE" id="PS51003">
    <property type="entry name" value="CYTB_CTER"/>
    <property type="match status" value="1"/>
</dbReference>
<dbReference type="PROSITE" id="PS51002">
    <property type="entry name" value="CYTB_NTER"/>
    <property type="match status" value="1"/>
</dbReference>
<name>CYB_NATST</name>
<gene>
    <name type="primary">MT-CYB</name>
    <name type="synonym">COB</name>
    <name type="synonym">CYTB</name>
    <name type="synonym">MTCYB</name>
</gene>
<protein>
    <recommendedName>
        <fullName>Cytochrome b</fullName>
    </recommendedName>
    <alternativeName>
        <fullName>Complex III subunit 3</fullName>
    </alternativeName>
    <alternativeName>
        <fullName>Complex III subunit III</fullName>
    </alternativeName>
    <alternativeName>
        <fullName>Cytochrome b-c1 complex subunit 3</fullName>
    </alternativeName>
    <alternativeName>
        <fullName>Ubiquinol-cytochrome-c reductase complex cytochrome b subunit</fullName>
    </alternativeName>
</protein>
<organism>
    <name type="scientific">Natalus stramineus</name>
    <name type="common">Mexican funnel-eared bat</name>
    <dbReference type="NCBI Taxonomy" id="155040"/>
    <lineage>
        <taxon>Eukaryota</taxon>
        <taxon>Metazoa</taxon>
        <taxon>Chordata</taxon>
        <taxon>Craniata</taxon>
        <taxon>Vertebrata</taxon>
        <taxon>Euteleostomi</taxon>
        <taxon>Mammalia</taxon>
        <taxon>Eutheria</taxon>
        <taxon>Laurasiatheria</taxon>
        <taxon>Chiroptera</taxon>
        <taxon>Yangochiroptera</taxon>
        <taxon>Natalidae</taxon>
        <taxon>Natalus</taxon>
    </lineage>
</organism>
<proteinExistence type="inferred from homology"/>
<sequence>MTNIRKSHPLTKIINSSFIDLPTPSSISSWWNFGSLLGICLAVQILTGLFLAMHYTADTATAFNSVTHICRDVNYGWILRYMHANGASMFFICLYLHVGRGLYYGSYTYTETWNVGIMLLFAVMATAFMGYVLPWGQMSFWGATVITNLLSAIPYIGTNLVEWIWGGFSVDKATLTRFFAFHFILPFIISAMVMVHLLFLHETGSNNPTGIPSNMDMIPFHPYHTIKDILGLLLMLTALLVLVMFSPDLLGDPDNYIPANPLNTPPHIKPEWYFLFAYAILRSIPNKLGGVLALVLSILILAIIPLLHTSKQRSMMFRPISQCLFWLLVADMLTLTWIGGQPVEHPYIIIGQLASILYFSIILIFMPLASLTENHLLKW</sequence>
<comment type="function">
    <text evidence="2">Component of the ubiquinol-cytochrome c reductase complex (complex III or cytochrome b-c1 complex) that is part of the mitochondrial respiratory chain. The b-c1 complex mediates electron transfer from ubiquinol to cytochrome c. Contributes to the generation of a proton gradient across the mitochondrial membrane that is then used for ATP synthesis.</text>
</comment>
<comment type="cofactor">
    <cofactor evidence="2">
        <name>heme b</name>
        <dbReference type="ChEBI" id="CHEBI:60344"/>
    </cofactor>
    <text evidence="2">Binds 2 heme b groups non-covalently.</text>
</comment>
<comment type="subunit">
    <text evidence="2">The cytochrome bc1 complex contains 11 subunits: 3 respiratory subunits (MT-CYB, CYC1 and UQCRFS1), 2 core proteins (UQCRC1 and UQCRC2) and 6 low-molecular weight proteins (UQCRH/QCR6, UQCRB/QCR7, UQCRQ/QCR8, UQCR10/QCR9, UQCR11/QCR10 and a cleavage product of UQCRFS1). This cytochrome bc1 complex then forms a dimer.</text>
</comment>
<comment type="subcellular location">
    <subcellularLocation>
        <location evidence="2">Mitochondrion inner membrane</location>
        <topology evidence="2">Multi-pass membrane protein</topology>
    </subcellularLocation>
</comment>
<comment type="miscellaneous">
    <text evidence="1">Heme 1 (or BL or b562) is low-potential and absorbs at about 562 nm, and heme 2 (or BH or b566) is high-potential and absorbs at about 566 nm.</text>
</comment>
<comment type="similarity">
    <text evidence="3 4">Belongs to the cytochrome b family.</text>
</comment>
<comment type="caution">
    <text evidence="2">The full-length protein contains only eight transmembrane helices, not nine as predicted by bioinformatics tools.</text>
</comment>
<evidence type="ECO:0000250" key="1"/>
<evidence type="ECO:0000250" key="2">
    <source>
        <dbReference type="UniProtKB" id="P00157"/>
    </source>
</evidence>
<evidence type="ECO:0000255" key="3">
    <source>
        <dbReference type="PROSITE-ProRule" id="PRU00967"/>
    </source>
</evidence>
<evidence type="ECO:0000255" key="4">
    <source>
        <dbReference type="PROSITE-ProRule" id="PRU00968"/>
    </source>
</evidence>
<feature type="chain" id="PRO_0000254834" description="Cytochrome b">
    <location>
        <begin position="1"/>
        <end position="379"/>
    </location>
</feature>
<feature type="transmembrane region" description="Helical" evidence="2">
    <location>
        <begin position="33"/>
        <end position="53"/>
    </location>
</feature>
<feature type="transmembrane region" description="Helical" evidence="2">
    <location>
        <begin position="77"/>
        <end position="98"/>
    </location>
</feature>
<feature type="transmembrane region" description="Helical" evidence="2">
    <location>
        <begin position="113"/>
        <end position="133"/>
    </location>
</feature>
<feature type="transmembrane region" description="Helical" evidence="2">
    <location>
        <begin position="178"/>
        <end position="198"/>
    </location>
</feature>
<feature type="transmembrane region" description="Helical" evidence="2">
    <location>
        <begin position="226"/>
        <end position="246"/>
    </location>
</feature>
<feature type="transmembrane region" description="Helical" evidence="2">
    <location>
        <begin position="288"/>
        <end position="308"/>
    </location>
</feature>
<feature type="transmembrane region" description="Helical" evidence="2">
    <location>
        <begin position="320"/>
        <end position="340"/>
    </location>
</feature>
<feature type="transmembrane region" description="Helical" evidence="2">
    <location>
        <begin position="347"/>
        <end position="367"/>
    </location>
</feature>
<feature type="binding site" description="axial binding residue" evidence="2">
    <location>
        <position position="83"/>
    </location>
    <ligand>
        <name>heme b</name>
        <dbReference type="ChEBI" id="CHEBI:60344"/>
        <label>b562</label>
    </ligand>
    <ligandPart>
        <name>Fe</name>
        <dbReference type="ChEBI" id="CHEBI:18248"/>
    </ligandPart>
</feature>
<feature type="binding site" description="axial binding residue" evidence="2">
    <location>
        <position position="97"/>
    </location>
    <ligand>
        <name>heme b</name>
        <dbReference type="ChEBI" id="CHEBI:60344"/>
        <label>b566</label>
    </ligand>
    <ligandPart>
        <name>Fe</name>
        <dbReference type="ChEBI" id="CHEBI:18248"/>
    </ligandPart>
</feature>
<feature type="binding site" description="axial binding residue" evidence="2">
    <location>
        <position position="182"/>
    </location>
    <ligand>
        <name>heme b</name>
        <dbReference type="ChEBI" id="CHEBI:60344"/>
        <label>b562</label>
    </ligand>
    <ligandPart>
        <name>Fe</name>
        <dbReference type="ChEBI" id="CHEBI:18248"/>
    </ligandPart>
</feature>
<feature type="binding site" description="axial binding residue" evidence="2">
    <location>
        <position position="196"/>
    </location>
    <ligand>
        <name>heme b</name>
        <dbReference type="ChEBI" id="CHEBI:60344"/>
        <label>b566</label>
    </ligand>
    <ligandPart>
        <name>Fe</name>
        <dbReference type="ChEBI" id="CHEBI:18248"/>
    </ligandPart>
</feature>
<feature type="binding site" evidence="2">
    <location>
        <position position="201"/>
    </location>
    <ligand>
        <name>a ubiquinone</name>
        <dbReference type="ChEBI" id="CHEBI:16389"/>
    </ligand>
</feature>
<geneLocation type="mitochondrion"/>
<reference key="1">
    <citation type="journal article" date="2005" name="Mol. Phylogenet. Evol.">
        <title>Molecular phylogeny of funnel-eared bats (Chiroptera: Natalidae), with notes on biogeography and conservation.</title>
        <authorList>
            <person name="Davalos L.M."/>
        </authorList>
    </citation>
    <scope>NUCLEOTIDE SEQUENCE [GENOMIC DNA]</scope>
</reference>
<accession>Q4VUU4</accession>